<name>TRMD_SHEWM</name>
<feature type="chain" id="PRO_1000130209" description="tRNA (guanine-N(1)-)-methyltransferase">
    <location>
        <begin position="1"/>
        <end position="248"/>
    </location>
</feature>
<feature type="binding site" evidence="1">
    <location>
        <position position="113"/>
    </location>
    <ligand>
        <name>S-adenosyl-L-methionine</name>
        <dbReference type="ChEBI" id="CHEBI:59789"/>
    </ligand>
</feature>
<feature type="binding site" evidence="1">
    <location>
        <begin position="133"/>
        <end position="138"/>
    </location>
    <ligand>
        <name>S-adenosyl-L-methionine</name>
        <dbReference type="ChEBI" id="CHEBI:59789"/>
    </ligand>
</feature>
<keyword id="KW-0963">Cytoplasm</keyword>
<keyword id="KW-0489">Methyltransferase</keyword>
<keyword id="KW-1185">Reference proteome</keyword>
<keyword id="KW-0949">S-adenosyl-L-methionine</keyword>
<keyword id="KW-0808">Transferase</keyword>
<keyword id="KW-0819">tRNA processing</keyword>
<dbReference type="EC" id="2.1.1.228" evidence="1"/>
<dbReference type="EMBL" id="CP000961">
    <property type="protein sequence ID" value="ACA85548.1"/>
    <property type="molecule type" value="Genomic_DNA"/>
</dbReference>
<dbReference type="RefSeq" id="WP_012323894.1">
    <property type="nucleotide sequence ID" value="NC_010506.1"/>
</dbReference>
<dbReference type="SMR" id="B1KI70"/>
<dbReference type="STRING" id="392500.Swoo_1256"/>
<dbReference type="KEGG" id="swd:Swoo_1256"/>
<dbReference type="eggNOG" id="COG0336">
    <property type="taxonomic scope" value="Bacteria"/>
</dbReference>
<dbReference type="HOGENOM" id="CLU_047363_0_1_6"/>
<dbReference type="Proteomes" id="UP000002168">
    <property type="component" value="Chromosome"/>
</dbReference>
<dbReference type="GO" id="GO:0005829">
    <property type="term" value="C:cytosol"/>
    <property type="evidence" value="ECO:0007669"/>
    <property type="project" value="TreeGrafter"/>
</dbReference>
<dbReference type="GO" id="GO:0052906">
    <property type="term" value="F:tRNA (guanine(37)-N1)-methyltransferase activity"/>
    <property type="evidence" value="ECO:0007669"/>
    <property type="project" value="UniProtKB-UniRule"/>
</dbReference>
<dbReference type="GO" id="GO:0002939">
    <property type="term" value="P:tRNA N1-guanine methylation"/>
    <property type="evidence" value="ECO:0007669"/>
    <property type="project" value="TreeGrafter"/>
</dbReference>
<dbReference type="CDD" id="cd18080">
    <property type="entry name" value="TrmD-like"/>
    <property type="match status" value="1"/>
</dbReference>
<dbReference type="FunFam" id="1.10.1270.20:FF:000001">
    <property type="entry name" value="tRNA (guanine-N(1)-)-methyltransferase"/>
    <property type="match status" value="1"/>
</dbReference>
<dbReference type="FunFam" id="3.40.1280.10:FF:000001">
    <property type="entry name" value="tRNA (guanine-N(1)-)-methyltransferase"/>
    <property type="match status" value="1"/>
</dbReference>
<dbReference type="Gene3D" id="3.40.1280.10">
    <property type="match status" value="1"/>
</dbReference>
<dbReference type="Gene3D" id="1.10.1270.20">
    <property type="entry name" value="tRNA(m1g37)methyltransferase, domain 2"/>
    <property type="match status" value="1"/>
</dbReference>
<dbReference type="HAMAP" id="MF_00605">
    <property type="entry name" value="TrmD"/>
    <property type="match status" value="1"/>
</dbReference>
<dbReference type="InterPro" id="IPR029028">
    <property type="entry name" value="Alpha/beta_knot_MTases"/>
</dbReference>
<dbReference type="InterPro" id="IPR023148">
    <property type="entry name" value="tRNA_m1G_MeTrfase_C_sf"/>
</dbReference>
<dbReference type="InterPro" id="IPR002649">
    <property type="entry name" value="tRNA_m1G_MeTrfase_TrmD"/>
</dbReference>
<dbReference type="InterPro" id="IPR029026">
    <property type="entry name" value="tRNA_m1G_MTases_N"/>
</dbReference>
<dbReference type="InterPro" id="IPR016009">
    <property type="entry name" value="tRNA_MeTrfase_TRMD/TRM10"/>
</dbReference>
<dbReference type="NCBIfam" id="NF000648">
    <property type="entry name" value="PRK00026.1"/>
    <property type="match status" value="1"/>
</dbReference>
<dbReference type="NCBIfam" id="TIGR00088">
    <property type="entry name" value="trmD"/>
    <property type="match status" value="1"/>
</dbReference>
<dbReference type="PANTHER" id="PTHR46417">
    <property type="entry name" value="TRNA (GUANINE-N(1)-)-METHYLTRANSFERASE"/>
    <property type="match status" value="1"/>
</dbReference>
<dbReference type="PANTHER" id="PTHR46417:SF1">
    <property type="entry name" value="TRNA (GUANINE-N(1)-)-METHYLTRANSFERASE"/>
    <property type="match status" value="1"/>
</dbReference>
<dbReference type="Pfam" id="PF01746">
    <property type="entry name" value="tRNA_m1G_MT"/>
    <property type="match status" value="1"/>
</dbReference>
<dbReference type="PIRSF" id="PIRSF000386">
    <property type="entry name" value="tRNA_mtase"/>
    <property type="match status" value="1"/>
</dbReference>
<dbReference type="SUPFAM" id="SSF75217">
    <property type="entry name" value="alpha/beta knot"/>
    <property type="match status" value="1"/>
</dbReference>
<protein>
    <recommendedName>
        <fullName evidence="1">tRNA (guanine-N(1)-)-methyltransferase</fullName>
        <ecNumber evidence="1">2.1.1.228</ecNumber>
    </recommendedName>
    <alternativeName>
        <fullName evidence="1">M1G-methyltransferase</fullName>
    </alternativeName>
    <alternativeName>
        <fullName evidence="1">tRNA [GM37] methyltransferase</fullName>
    </alternativeName>
</protein>
<proteinExistence type="inferred from homology"/>
<sequence>MWLGVVTLFPEMFRAVTDFGVTGRAVNKGLLELQTWNPRDFTHDKHKTVDDRPYGGGPGMLMMVQPLRDAIHAAKAAAGDSAKVIYLSPQGRKLTQQGVEELAKSDSLILVCGRYEGVDERIIQTEVDEEWSIGDYVLSGGELPAMTLIDSVSRLVPGVLGKQASAEQDSFSDGLLDCPHYTRPETLDGLDVPAVLLSGNHEHIRRWRLQQSLGRTLLRRPELLENLALTDEQTKLLAQFVDSTNECG</sequence>
<evidence type="ECO:0000255" key="1">
    <source>
        <dbReference type="HAMAP-Rule" id="MF_00605"/>
    </source>
</evidence>
<reference key="1">
    <citation type="submission" date="2008-02" db="EMBL/GenBank/DDBJ databases">
        <title>Complete sequence of Shewanella woodyi ATCC 51908.</title>
        <authorList>
            <consortium name="US DOE Joint Genome Institute"/>
            <person name="Copeland A."/>
            <person name="Lucas S."/>
            <person name="Lapidus A."/>
            <person name="Glavina del Rio T."/>
            <person name="Dalin E."/>
            <person name="Tice H."/>
            <person name="Bruce D."/>
            <person name="Goodwin L."/>
            <person name="Pitluck S."/>
            <person name="Sims D."/>
            <person name="Brettin T."/>
            <person name="Detter J.C."/>
            <person name="Han C."/>
            <person name="Kuske C.R."/>
            <person name="Schmutz J."/>
            <person name="Larimer F."/>
            <person name="Land M."/>
            <person name="Hauser L."/>
            <person name="Kyrpides N."/>
            <person name="Lykidis A."/>
            <person name="Zhao J.-S."/>
            <person name="Richardson P."/>
        </authorList>
    </citation>
    <scope>NUCLEOTIDE SEQUENCE [LARGE SCALE GENOMIC DNA]</scope>
    <source>
        <strain>ATCC 51908 / MS32</strain>
    </source>
</reference>
<gene>
    <name evidence="1" type="primary">trmD</name>
    <name type="ordered locus">Swoo_1256</name>
</gene>
<accession>B1KI70</accession>
<organism>
    <name type="scientific">Shewanella woodyi (strain ATCC 51908 / MS32)</name>
    <dbReference type="NCBI Taxonomy" id="392500"/>
    <lineage>
        <taxon>Bacteria</taxon>
        <taxon>Pseudomonadati</taxon>
        <taxon>Pseudomonadota</taxon>
        <taxon>Gammaproteobacteria</taxon>
        <taxon>Alteromonadales</taxon>
        <taxon>Shewanellaceae</taxon>
        <taxon>Shewanella</taxon>
    </lineage>
</organism>
<comment type="function">
    <text evidence="1">Specifically methylates guanosine-37 in various tRNAs.</text>
</comment>
<comment type="catalytic activity">
    <reaction evidence="1">
        <text>guanosine(37) in tRNA + S-adenosyl-L-methionine = N(1)-methylguanosine(37) in tRNA + S-adenosyl-L-homocysteine + H(+)</text>
        <dbReference type="Rhea" id="RHEA:36899"/>
        <dbReference type="Rhea" id="RHEA-COMP:10145"/>
        <dbReference type="Rhea" id="RHEA-COMP:10147"/>
        <dbReference type="ChEBI" id="CHEBI:15378"/>
        <dbReference type="ChEBI" id="CHEBI:57856"/>
        <dbReference type="ChEBI" id="CHEBI:59789"/>
        <dbReference type="ChEBI" id="CHEBI:73542"/>
        <dbReference type="ChEBI" id="CHEBI:74269"/>
        <dbReference type="EC" id="2.1.1.228"/>
    </reaction>
</comment>
<comment type="subunit">
    <text evidence="1">Homodimer.</text>
</comment>
<comment type="subcellular location">
    <subcellularLocation>
        <location evidence="1">Cytoplasm</location>
    </subcellularLocation>
</comment>
<comment type="similarity">
    <text evidence="1">Belongs to the RNA methyltransferase TrmD family.</text>
</comment>